<dbReference type="EMBL" id="AL590842">
    <property type="protein sequence ID" value="CAL18709.1"/>
    <property type="molecule type" value="Genomic_DNA"/>
</dbReference>
<dbReference type="EMBL" id="AE009952">
    <property type="protein sequence ID" value="AAM87354.1"/>
    <property type="molecule type" value="Genomic_DNA"/>
</dbReference>
<dbReference type="EMBL" id="AE017042">
    <property type="protein sequence ID" value="AAS60301.1"/>
    <property type="molecule type" value="Genomic_DNA"/>
</dbReference>
<dbReference type="PIR" id="AD0003">
    <property type="entry name" value="AD0003"/>
</dbReference>
<dbReference type="RefSeq" id="YP_002345115.1">
    <property type="nucleotide sequence ID" value="NC_003143.1"/>
</dbReference>
<dbReference type="SMR" id="Q8ZJS0"/>
<dbReference type="STRING" id="214092.YPO0019"/>
<dbReference type="PaxDb" id="214092-YPO0019"/>
<dbReference type="DNASU" id="1148756"/>
<dbReference type="EnsemblBacteria" id="AAS60301">
    <property type="protein sequence ID" value="AAS60301"/>
    <property type="gene ID" value="YP_0020"/>
</dbReference>
<dbReference type="KEGG" id="ype:YPO0019"/>
<dbReference type="KEGG" id="ypk:y3809"/>
<dbReference type="KEGG" id="ypm:YP_0020"/>
<dbReference type="PATRIC" id="fig|214092.21.peg.240"/>
<dbReference type="eggNOG" id="COG0218">
    <property type="taxonomic scope" value="Bacteria"/>
</dbReference>
<dbReference type="HOGENOM" id="CLU_033732_1_2_6"/>
<dbReference type="OMA" id="AKVDQCP"/>
<dbReference type="OrthoDB" id="9804921at2"/>
<dbReference type="Proteomes" id="UP000000815">
    <property type="component" value="Chromosome"/>
</dbReference>
<dbReference type="Proteomes" id="UP000001019">
    <property type="component" value="Chromosome"/>
</dbReference>
<dbReference type="Proteomes" id="UP000002490">
    <property type="component" value="Chromosome"/>
</dbReference>
<dbReference type="GO" id="GO:0005829">
    <property type="term" value="C:cytosol"/>
    <property type="evidence" value="ECO:0000318"/>
    <property type="project" value="GO_Central"/>
</dbReference>
<dbReference type="GO" id="GO:0005525">
    <property type="term" value="F:GTP binding"/>
    <property type="evidence" value="ECO:0007669"/>
    <property type="project" value="UniProtKB-UniRule"/>
</dbReference>
<dbReference type="GO" id="GO:0046872">
    <property type="term" value="F:metal ion binding"/>
    <property type="evidence" value="ECO:0007669"/>
    <property type="project" value="UniProtKB-KW"/>
</dbReference>
<dbReference type="GO" id="GO:0000917">
    <property type="term" value="P:division septum assembly"/>
    <property type="evidence" value="ECO:0007669"/>
    <property type="project" value="UniProtKB-KW"/>
</dbReference>
<dbReference type="CDD" id="cd01876">
    <property type="entry name" value="YihA_EngB"/>
    <property type="match status" value="1"/>
</dbReference>
<dbReference type="FunFam" id="3.40.50.300:FF:000098">
    <property type="entry name" value="Probable GTP-binding protein EngB"/>
    <property type="match status" value="1"/>
</dbReference>
<dbReference type="Gene3D" id="3.40.50.300">
    <property type="entry name" value="P-loop containing nucleotide triphosphate hydrolases"/>
    <property type="match status" value="1"/>
</dbReference>
<dbReference type="HAMAP" id="MF_00321">
    <property type="entry name" value="GTPase_EngB"/>
    <property type="match status" value="1"/>
</dbReference>
<dbReference type="InterPro" id="IPR030393">
    <property type="entry name" value="G_ENGB_dom"/>
</dbReference>
<dbReference type="InterPro" id="IPR006073">
    <property type="entry name" value="GTP-bd"/>
</dbReference>
<dbReference type="InterPro" id="IPR019987">
    <property type="entry name" value="GTP-bd_ribosome_bio_YsxC"/>
</dbReference>
<dbReference type="InterPro" id="IPR027417">
    <property type="entry name" value="P-loop_NTPase"/>
</dbReference>
<dbReference type="NCBIfam" id="TIGR03598">
    <property type="entry name" value="GTPase_YsxC"/>
    <property type="match status" value="1"/>
</dbReference>
<dbReference type="PANTHER" id="PTHR11649:SF13">
    <property type="entry name" value="ENGB-TYPE G DOMAIN-CONTAINING PROTEIN"/>
    <property type="match status" value="1"/>
</dbReference>
<dbReference type="PANTHER" id="PTHR11649">
    <property type="entry name" value="MSS1/TRME-RELATED GTP-BINDING PROTEIN"/>
    <property type="match status" value="1"/>
</dbReference>
<dbReference type="Pfam" id="PF01926">
    <property type="entry name" value="MMR_HSR1"/>
    <property type="match status" value="1"/>
</dbReference>
<dbReference type="SUPFAM" id="SSF52540">
    <property type="entry name" value="P-loop containing nucleoside triphosphate hydrolases"/>
    <property type="match status" value="1"/>
</dbReference>
<dbReference type="PROSITE" id="PS51706">
    <property type="entry name" value="G_ENGB"/>
    <property type="match status" value="1"/>
</dbReference>
<keyword id="KW-0131">Cell cycle</keyword>
<keyword id="KW-0132">Cell division</keyword>
<keyword id="KW-0342">GTP-binding</keyword>
<keyword id="KW-0460">Magnesium</keyword>
<keyword id="KW-0479">Metal-binding</keyword>
<keyword id="KW-0547">Nucleotide-binding</keyword>
<keyword id="KW-1185">Reference proteome</keyword>
<keyword id="KW-0717">Septation</keyword>
<reference key="1">
    <citation type="journal article" date="2001" name="Nature">
        <title>Genome sequence of Yersinia pestis, the causative agent of plague.</title>
        <authorList>
            <person name="Parkhill J."/>
            <person name="Wren B.W."/>
            <person name="Thomson N.R."/>
            <person name="Titball R.W."/>
            <person name="Holden M.T.G."/>
            <person name="Prentice M.B."/>
            <person name="Sebaihia M."/>
            <person name="James K.D."/>
            <person name="Churcher C.M."/>
            <person name="Mungall K.L."/>
            <person name="Baker S."/>
            <person name="Basham D."/>
            <person name="Bentley S.D."/>
            <person name="Brooks K."/>
            <person name="Cerdeno-Tarraga A.-M."/>
            <person name="Chillingworth T."/>
            <person name="Cronin A."/>
            <person name="Davies R.M."/>
            <person name="Davis P."/>
            <person name="Dougan G."/>
            <person name="Feltwell T."/>
            <person name="Hamlin N."/>
            <person name="Holroyd S."/>
            <person name="Jagels K."/>
            <person name="Karlyshev A.V."/>
            <person name="Leather S."/>
            <person name="Moule S."/>
            <person name="Oyston P.C.F."/>
            <person name="Quail M.A."/>
            <person name="Rutherford K.M."/>
            <person name="Simmonds M."/>
            <person name="Skelton J."/>
            <person name="Stevens K."/>
            <person name="Whitehead S."/>
            <person name="Barrell B.G."/>
        </authorList>
    </citation>
    <scope>NUCLEOTIDE SEQUENCE [LARGE SCALE GENOMIC DNA]</scope>
    <source>
        <strain>CO-92 / Biovar Orientalis</strain>
    </source>
</reference>
<reference key="2">
    <citation type="journal article" date="2002" name="J. Bacteriol.">
        <title>Genome sequence of Yersinia pestis KIM.</title>
        <authorList>
            <person name="Deng W."/>
            <person name="Burland V."/>
            <person name="Plunkett G. III"/>
            <person name="Boutin A."/>
            <person name="Mayhew G.F."/>
            <person name="Liss P."/>
            <person name="Perna N.T."/>
            <person name="Rose D.J."/>
            <person name="Mau B."/>
            <person name="Zhou S."/>
            <person name="Schwartz D.C."/>
            <person name="Fetherston J.D."/>
            <person name="Lindler L.E."/>
            <person name="Brubaker R.R."/>
            <person name="Plano G.V."/>
            <person name="Straley S.C."/>
            <person name="McDonough K.A."/>
            <person name="Nilles M.L."/>
            <person name="Matson J.S."/>
            <person name="Blattner F.R."/>
            <person name="Perry R.D."/>
        </authorList>
    </citation>
    <scope>NUCLEOTIDE SEQUENCE [LARGE SCALE GENOMIC DNA]</scope>
    <source>
        <strain>KIM10+ / Biovar Mediaevalis</strain>
    </source>
</reference>
<reference key="3">
    <citation type="journal article" date="2004" name="DNA Res.">
        <title>Complete genome sequence of Yersinia pestis strain 91001, an isolate avirulent to humans.</title>
        <authorList>
            <person name="Song Y."/>
            <person name="Tong Z."/>
            <person name="Wang J."/>
            <person name="Wang L."/>
            <person name="Guo Z."/>
            <person name="Han Y."/>
            <person name="Zhang J."/>
            <person name="Pei D."/>
            <person name="Zhou D."/>
            <person name="Qin H."/>
            <person name="Pang X."/>
            <person name="Han Y."/>
            <person name="Zhai J."/>
            <person name="Li M."/>
            <person name="Cui B."/>
            <person name="Qi Z."/>
            <person name="Jin L."/>
            <person name="Dai R."/>
            <person name="Chen F."/>
            <person name="Li S."/>
            <person name="Ye C."/>
            <person name="Du Z."/>
            <person name="Lin W."/>
            <person name="Wang J."/>
            <person name="Yu J."/>
            <person name="Yang H."/>
            <person name="Wang J."/>
            <person name="Huang P."/>
            <person name="Yang R."/>
        </authorList>
    </citation>
    <scope>NUCLEOTIDE SEQUENCE [LARGE SCALE GENOMIC DNA]</scope>
    <source>
        <strain>91001 / Biovar Mediaevalis</strain>
    </source>
</reference>
<sequence length="216" mass="24205">MTIRNYNYHMTHFVISAPDIRHLPRDEGIEVAFAGRSNAGKSSALNTLTNQKGLARTSKTPGRTQLINLFEVVDGVRLVDLPGYGYAEVPEEMKLKWQRALGEYLQKRNCLKGLVVLMDIRHPLKDLDQQMITWAVAVGTPVLLLLTKADKLASGARKAQLNLVREAIIPFMGDIQVEAFSSLKKIGVDKLREKLDTWFSEIPPEVMAEEFDGEGE</sequence>
<name>ENGB_YERPE</name>
<accession>Q8ZJS0</accession>
<accession>Q0WKS3</accession>
<comment type="function">
    <text evidence="1">Necessary for normal cell division and for the maintenance of normal septation.</text>
</comment>
<comment type="cofactor">
    <cofactor evidence="1">
        <name>Mg(2+)</name>
        <dbReference type="ChEBI" id="CHEBI:18420"/>
    </cofactor>
</comment>
<comment type="similarity">
    <text evidence="1">Belongs to the TRAFAC class TrmE-Era-EngA-EngB-Septin-like GTPase superfamily. EngB GTPase family.</text>
</comment>
<gene>
    <name evidence="1" type="primary">engB</name>
    <name type="ordered locus">YPO0019</name>
    <name type="ordered locus">y3809</name>
    <name type="ordered locus">YP_0020</name>
</gene>
<feature type="chain" id="PRO_0000157806" description="Probable GTP-binding protein EngB">
    <location>
        <begin position="1"/>
        <end position="216"/>
    </location>
</feature>
<feature type="domain" description="EngB-type G" evidence="1">
    <location>
        <begin position="27"/>
        <end position="201"/>
    </location>
</feature>
<feature type="binding site" evidence="1">
    <location>
        <begin position="35"/>
        <end position="42"/>
    </location>
    <ligand>
        <name>GTP</name>
        <dbReference type="ChEBI" id="CHEBI:37565"/>
    </ligand>
</feature>
<feature type="binding site" evidence="1">
    <location>
        <position position="42"/>
    </location>
    <ligand>
        <name>Mg(2+)</name>
        <dbReference type="ChEBI" id="CHEBI:18420"/>
    </ligand>
</feature>
<feature type="binding site" evidence="1">
    <location>
        <begin position="62"/>
        <end position="66"/>
    </location>
    <ligand>
        <name>GTP</name>
        <dbReference type="ChEBI" id="CHEBI:37565"/>
    </ligand>
</feature>
<feature type="binding site" evidence="1">
    <location>
        <position position="64"/>
    </location>
    <ligand>
        <name>Mg(2+)</name>
        <dbReference type="ChEBI" id="CHEBI:18420"/>
    </ligand>
</feature>
<feature type="binding site" evidence="1">
    <location>
        <begin position="80"/>
        <end position="83"/>
    </location>
    <ligand>
        <name>GTP</name>
        <dbReference type="ChEBI" id="CHEBI:37565"/>
    </ligand>
</feature>
<feature type="binding site" evidence="1">
    <location>
        <begin position="147"/>
        <end position="150"/>
    </location>
    <ligand>
        <name>GTP</name>
        <dbReference type="ChEBI" id="CHEBI:37565"/>
    </ligand>
</feature>
<feature type="binding site" evidence="1">
    <location>
        <begin position="180"/>
        <end position="182"/>
    </location>
    <ligand>
        <name>GTP</name>
        <dbReference type="ChEBI" id="CHEBI:37565"/>
    </ligand>
</feature>
<organism>
    <name type="scientific">Yersinia pestis</name>
    <dbReference type="NCBI Taxonomy" id="632"/>
    <lineage>
        <taxon>Bacteria</taxon>
        <taxon>Pseudomonadati</taxon>
        <taxon>Pseudomonadota</taxon>
        <taxon>Gammaproteobacteria</taxon>
        <taxon>Enterobacterales</taxon>
        <taxon>Yersiniaceae</taxon>
        <taxon>Yersinia</taxon>
    </lineage>
</organism>
<protein>
    <recommendedName>
        <fullName evidence="1">Probable GTP-binding protein EngB</fullName>
    </recommendedName>
</protein>
<proteinExistence type="inferred from homology"/>
<evidence type="ECO:0000255" key="1">
    <source>
        <dbReference type="HAMAP-Rule" id="MF_00321"/>
    </source>
</evidence>